<accession>P04795</accession>
<feature type="chain" id="PRO_0000125988" description="17.6 kDa class I heat shock protein">
    <location>
        <begin position="1"/>
        <end position="154"/>
    </location>
</feature>
<feature type="domain" description="sHSP" evidence="1">
    <location>
        <begin position="40"/>
        <end position="154"/>
    </location>
</feature>
<protein>
    <recommendedName>
        <fullName>17.6 kDa class I heat shock protein</fullName>
    </recommendedName>
    <alternativeName>
        <fullName>HSP 17.6-L</fullName>
    </alternativeName>
</protein>
<sequence>MSLIPSIFGGPRSNVFDPFSLDMWDPFKDFHVPTSSVSAENSAFVNTRVDWKETQEAHVLKADIPGLKKEEVKVQIEDDRVLQISGERNVEKEDKNDTWHRVDRSSGKFMRRFRLPENAKVEQVKACMENGVLTVTIPKEEVKKSDVKPIEISG</sequence>
<organism>
    <name type="scientific">Glycine max</name>
    <name type="common">Soybean</name>
    <name type="synonym">Glycine hispida</name>
    <dbReference type="NCBI Taxonomy" id="3847"/>
    <lineage>
        <taxon>Eukaryota</taxon>
        <taxon>Viridiplantae</taxon>
        <taxon>Streptophyta</taxon>
        <taxon>Embryophyta</taxon>
        <taxon>Tracheophyta</taxon>
        <taxon>Spermatophyta</taxon>
        <taxon>Magnoliopsida</taxon>
        <taxon>eudicotyledons</taxon>
        <taxon>Gunneridae</taxon>
        <taxon>Pentapetalae</taxon>
        <taxon>rosids</taxon>
        <taxon>fabids</taxon>
        <taxon>Fabales</taxon>
        <taxon>Fabaceae</taxon>
        <taxon>Papilionoideae</taxon>
        <taxon>50 kb inversion clade</taxon>
        <taxon>NPAAA clade</taxon>
        <taxon>indigoferoid/millettioid clade</taxon>
        <taxon>Phaseoleae</taxon>
        <taxon>Glycine</taxon>
        <taxon>Glycine subgen. Soja</taxon>
    </lineage>
</organism>
<dbReference type="EMBL" id="M11317">
    <property type="protein sequence ID" value="AAA33974.1"/>
    <property type="molecule type" value="Genomic_DNA"/>
</dbReference>
<dbReference type="PIR" id="T07625">
    <property type="entry name" value="T07625"/>
</dbReference>
<dbReference type="SMR" id="P04795"/>
<dbReference type="FunCoup" id="P04795">
    <property type="interactions" value="335"/>
</dbReference>
<dbReference type="STRING" id="3847.P04795"/>
<dbReference type="InParanoid" id="P04795"/>
<dbReference type="Proteomes" id="UP000008827">
    <property type="component" value="Unplaced"/>
</dbReference>
<dbReference type="GO" id="GO:0005737">
    <property type="term" value="C:cytoplasm"/>
    <property type="evidence" value="ECO:0007669"/>
    <property type="project" value="UniProtKB-SubCell"/>
</dbReference>
<dbReference type="GO" id="GO:0051082">
    <property type="term" value="F:unfolded protein binding"/>
    <property type="evidence" value="ECO:0000318"/>
    <property type="project" value="GO_Central"/>
</dbReference>
<dbReference type="GO" id="GO:0051259">
    <property type="term" value="P:protein complex oligomerization"/>
    <property type="evidence" value="ECO:0000318"/>
    <property type="project" value="GO_Central"/>
</dbReference>
<dbReference type="GO" id="GO:0006457">
    <property type="term" value="P:protein folding"/>
    <property type="evidence" value="ECO:0000318"/>
    <property type="project" value="GO_Central"/>
</dbReference>
<dbReference type="GO" id="GO:0009408">
    <property type="term" value="P:response to heat"/>
    <property type="evidence" value="ECO:0000318"/>
    <property type="project" value="GO_Central"/>
</dbReference>
<dbReference type="GO" id="GO:0042542">
    <property type="term" value="P:response to hydrogen peroxide"/>
    <property type="evidence" value="ECO:0000318"/>
    <property type="project" value="GO_Central"/>
</dbReference>
<dbReference type="GO" id="GO:0009651">
    <property type="term" value="P:response to salt stress"/>
    <property type="evidence" value="ECO:0000318"/>
    <property type="project" value="GO_Central"/>
</dbReference>
<dbReference type="CDD" id="cd06472">
    <property type="entry name" value="ACD_ScHsp26_like"/>
    <property type="match status" value="1"/>
</dbReference>
<dbReference type="FunFam" id="2.60.40.790:FF:000009">
    <property type="entry name" value="17.6 kDa class I heat shock protein-like"/>
    <property type="match status" value="1"/>
</dbReference>
<dbReference type="Gene3D" id="2.60.40.790">
    <property type="match status" value="1"/>
</dbReference>
<dbReference type="InterPro" id="IPR002068">
    <property type="entry name" value="A-crystallin/Hsp20_dom"/>
</dbReference>
<dbReference type="InterPro" id="IPR008978">
    <property type="entry name" value="HSP20-like_chaperone"/>
</dbReference>
<dbReference type="InterPro" id="IPR031107">
    <property type="entry name" value="Small_HSP"/>
</dbReference>
<dbReference type="PANTHER" id="PTHR11527">
    <property type="entry name" value="HEAT-SHOCK PROTEIN 20 FAMILY MEMBER"/>
    <property type="match status" value="1"/>
</dbReference>
<dbReference type="Pfam" id="PF00011">
    <property type="entry name" value="HSP20"/>
    <property type="match status" value="1"/>
</dbReference>
<dbReference type="SUPFAM" id="SSF49764">
    <property type="entry name" value="HSP20-like chaperones"/>
    <property type="match status" value="1"/>
</dbReference>
<dbReference type="PROSITE" id="PS01031">
    <property type="entry name" value="SHSP"/>
    <property type="match status" value="1"/>
</dbReference>
<reference key="1">
    <citation type="journal article" date="1985" name="Mol. Cell. Biol.">
        <title>Genes for low-molecular-weight heat shock proteins of soybeans: sequence analysis of a multigene family.</title>
        <authorList>
            <person name="Nagao R.T."/>
            <person name="Czarnecka E."/>
            <person name="Gurley W.B."/>
            <person name="Schoeffl F."/>
            <person name="Key J.L."/>
        </authorList>
    </citation>
    <scope>NUCLEOTIDE SEQUENCE [GENOMIC DNA]</scope>
    <source>
        <strain>cv. Corsoy</strain>
    </source>
</reference>
<name>HSP15_SOYBN</name>
<gene>
    <name type="primary">HSP17.6-L</name>
</gene>
<keyword id="KW-0963">Cytoplasm</keyword>
<keyword id="KW-1185">Reference proteome</keyword>
<keyword id="KW-0346">Stress response</keyword>
<evidence type="ECO:0000255" key="1">
    <source>
        <dbReference type="PROSITE-ProRule" id="PRU00285"/>
    </source>
</evidence>
<proteinExistence type="inferred from homology"/>
<comment type="subunit">
    <text>Forms oligomeric structures.</text>
</comment>
<comment type="subcellular location">
    <subcellularLocation>
        <location>Cytoplasm</location>
    </subcellularLocation>
</comment>
<comment type="similarity">
    <text evidence="1">Belongs to the small heat shock protein (HSP20) family.</text>
</comment>